<sequence>MTKKESAVDVLIIGAGPAGLIAAMWMAKCGITTRVVEQRPYQLRVGGADGIHPRSMEMFESFGIDQEITQVWEPITGWALWCRNAEGTLARSDRMDNPTPVRCRWGPGLLQQGIIERIIKEHISEQPSVRIEHETVSASLVIMEDALDKPDSHPCVITLRHDDSAGGSEELVRAKYVIGADGARSWTRKQLGFKMEGTRTRSVWAVTDLVVVSDFPDIRLCTTINSYGEGGLFFLRRERGLTRFYVQLNRADEVEFPAASITQELIIERLQRLLRPYTLTVKRCEWWSSYTVAHYLSDGMTKHDRVFLVGDAVHNHSPLVGLGMNISMQDSYNLGWKLAGVLKKELNPSILSTYETERRPVAAELIETDRFHLQLFDTATVTGSEPAWMLEREEALQPSMQGFAVHYQDPLLTVATEKECRPDAVIPGKRFPQLNVSNHATGKVYSIQSLLKSKGKFHVIVFAGDLSQPLELNRFNTCGTALQQIEEQILPASMGKFNVIAVHRARKTAIELASLADIFFPVDETTGRDYNRVYCDMETSYEEAGIGEQGAVVLVRPDQYVGWCGEVEDVQGLTGYLQPIFEAKKHA</sequence>
<reference key="1">
    <citation type="journal article" date="2019" name="Microbiol. Resour. Announc.">
        <title>Draft Genome Sequence of Azole-Resistant Aspergillus thermomutatus (Neosartorya pseudofischeri) Strain HMR-AF-39, Isolated from a Human Nasal Septum Abscess Aspirate.</title>
        <authorList>
            <person name="Parent-Michaud M."/>
            <person name="Dufresne P.J."/>
            <person name="Fournier E."/>
            <person name="Martineau C."/>
            <person name="Moreira S."/>
            <person name="Perkins V."/>
            <person name="de Repentigny L."/>
            <person name="Dufresne S.F."/>
        </authorList>
    </citation>
    <scope>NUCLEOTIDE SEQUENCE [LARGE SCALE GENOMIC DNA]</scope>
    <source>
        <strain>HMR-AF-39/LSPQ-01276</strain>
    </source>
</reference>
<reference key="2">
    <citation type="journal article" date="2023" name="Nat. Chem. Biol.">
        <title>Genome mining for unknown-unknown natural products.</title>
        <authorList>
            <person name="Yee D.A."/>
            <person name="Niwa K."/>
            <person name="Perlatti B."/>
            <person name="Chen M."/>
            <person name="Li Y."/>
            <person name="Tang Y."/>
        </authorList>
    </citation>
    <scope>FUNCTION</scope>
    <scope>CATALYTIC ACTIVITY</scope>
    <scope>PATHWAY</scope>
</reference>
<evidence type="ECO:0000250" key="1">
    <source>
        <dbReference type="UniProtKB" id="P15245"/>
    </source>
</evidence>
<evidence type="ECO:0000255" key="2"/>
<evidence type="ECO:0000269" key="3">
    <source>
    </source>
</evidence>
<evidence type="ECO:0000303" key="4">
    <source>
    </source>
</evidence>
<evidence type="ECO:0000305" key="5"/>
<proteinExistence type="evidence at protein level"/>
<gene>
    <name evidence="4" type="primary">ankC</name>
    <name type="ORF">CDV56_109012</name>
</gene>
<feature type="chain" id="PRO_0000460656" description="FAD-dependent monooxygenase ankC">
    <location>
        <begin position="1"/>
        <end position="587"/>
    </location>
</feature>
<feature type="transmembrane region" description="Helical" evidence="2">
    <location>
        <begin position="7"/>
        <end position="27"/>
    </location>
</feature>
<feature type="binding site" evidence="1">
    <location>
        <position position="245"/>
    </location>
    <ligand>
        <name>FAD</name>
        <dbReference type="ChEBI" id="CHEBI:57692"/>
    </ligand>
</feature>
<feature type="binding site" evidence="1">
    <location>
        <position position="311"/>
    </location>
    <ligand>
        <name>FAD</name>
        <dbReference type="ChEBI" id="CHEBI:57692"/>
    </ligand>
</feature>
<comment type="function">
    <text evidence="3">FAD-dependent monooxygenase; part of the ank cluster that mediates the biosynthesis of NK13650 C, a highly modified cyclo-arginine-tyrosine dipeptide (PubMed:36702957). AnkC uses as substrate the dehydro-cyclodipeptide intermediate generated by the monooxygase ankB and acts as a hydroxylase that installs the m-OH through a canonical flavin-dependent aromatic hydroxylation mechanism (PubMed:36702957). Within the pathway, the cyclodipeptide synthase ankA acts as the scaffold-generating enzyme and is responsible for formation of the cyclo-Arg-Tyr diketopiperazine (cRY) from L-Arg and L-Tyr. The ankA product cRY is desaturated by the cytochrome P450 monooxygenase ankB to yield a dehydro-cyclodipeptide intermediate. The FAD-dependent monooxygenase ankC then installs the m-OH, ankD catalyzes the attachment of L-homoserine, and ankE ligates citrate to the ankD product to yield NK13650 B. The O-methyltransferase ankF is responsible for methylation of the C-17 phenol group of NK13650 B to produce NK13650 D. Amidation of NK13650 D with L-Asp by ankG then leads to the production of NK13650 C, whereas amidation of NK13650 B produces NK13650 A (PubMed:36702957).</text>
</comment>
<comment type="catalytic activity">
    <reaction evidence="3">
        <text>cyclo(L-arginyl-L-dehydrotyrosyl) + AH2 + O2 = cyclo(L-arginyl-(Z)-dehydro-3,4-dihydroxytyrosyl) + A + H2O</text>
        <dbReference type="Rhea" id="RHEA:80211"/>
        <dbReference type="ChEBI" id="CHEBI:13193"/>
        <dbReference type="ChEBI" id="CHEBI:15377"/>
        <dbReference type="ChEBI" id="CHEBI:15379"/>
        <dbReference type="ChEBI" id="CHEBI:17499"/>
        <dbReference type="ChEBI" id="CHEBI:230544"/>
        <dbReference type="ChEBI" id="CHEBI:231272"/>
    </reaction>
    <physiologicalReaction direction="left-to-right" evidence="3">
        <dbReference type="Rhea" id="RHEA:80212"/>
    </physiologicalReaction>
</comment>
<comment type="cofactor">
    <cofactor evidence="1">
        <name>FAD</name>
        <dbReference type="ChEBI" id="CHEBI:57692"/>
    </cofactor>
</comment>
<comment type="pathway">
    <text evidence="3">Secondary metabolite biosynthesis.</text>
</comment>
<comment type="subunit">
    <text evidence="1">Homodimer.</text>
</comment>
<comment type="subcellular location">
    <subcellularLocation>
        <location evidence="2">Membrane</location>
        <topology evidence="2">Single-pass membrane protein</topology>
    </subcellularLocation>
</comment>
<comment type="similarity">
    <text evidence="5">Belongs to the PheA/TfdB FAD monooxygenase family.</text>
</comment>
<organism>
    <name type="scientific">Aspergillus thermomutatus</name>
    <name type="common">Neosartorya pseudofischeri</name>
    <dbReference type="NCBI Taxonomy" id="41047"/>
    <lineage>
        <taxon>Eukaryota</taxon>
        <taxon>Fungi</taxon>
        <taxon>Dikarya</taxon>
        <taxon>Ascomycota</taxon>
        <taxon>Pezizomycotina</taxon>
        <taxon>Eurotiomycetes</taxon>
        <taxon>Eurotiomycetidae</taxon>
        <taxon>Eurotiales</taxon>
        <taxon>Aspergillaceae</taxon>
        <taxon>Aspergillus</taxon>
        <taxon>Aspergillus subgen. Fumigati</taxon>
    </lineage>
</organism>
<accession>A0A397HQ89</accession>
<protein>
    <recommendedName>
        <fullName evidence="4">FAD-dependent monooxygenase ankC</fullName>
        <ecNumber evidence="3">1.14.13.-</ecNumber>
    </recommendedName>
    <alternativeName>
        <fullName evidence="4">Ank biosynthesis cluster protein C</fullName>
    </alternativeName>
</protein>
<name>ANKC_ASPTH</name>
<dbReference type="EC" id="1.14.13.-" evidence="3"/>
<dbReference type="EMBL" id="NKHU02000029">
    <property type="protein sequence ID" value="RHZ63464.1"/>
    <property type="molecule type" value="Genomic_DNA"/>
</dbReference>
<dbReference type="SMR" id="A0A397HQ89"/>
<dbReference type="STRING" id="41047.A0A397HQ89"/>
<dbReference type="VEuPathDB" id="FungiDB:CDV56_109012"/>
<dbReference type="OrthoDB" id="1716816at2759"/>
<dbReference type="Proteomes" id="UP000215305">
    <property type="component" value="Unassembled WGS sequence"/>
</dbReference>
<dbReference type="GO" id="GO:0016020">
    <property type="term" value="C:membrane"/>
    <property type="evidence" value="ECO:0007669"/>
    <property type="project" value="UniProtKB-SubCell"/>
</dbReference>
<dbReference type="GO" id="GO:0071949">
    <property type="term" value="F:FAD binding"/>
    <property type="evidence" value="ECO:0007669"/>
    <property type="project" value="InterPro"/>
</dbReference>
<dbReference type="GO" id="GO:0016709">
    <property type="term" value="F:oxidoreductase activity, acting on paired donors, with incorporation or reduction of molecular oxygen, NAD(P)H as one donor, and incorporation of one atom of oxygen"/>
    <property type="evidence" value="ECO:0007669"/>
    <property type="project" value="UniProtKB-ARBA"/>
</dbReference>
<dbReference type="CDD" id="cd02979">
    <property type="entry name" value="PHOX_C"/>
    <property type="match status" value="1"/>
</dbReference>
<dbReference type="Gene3D" id="3.40.30.20">
    <property type="match status" value="1"/>
</dbReference>
<dbReference type="Gene3D" id="3.30.9.10">
    <property type="entry name" value="D-Amino Acid Oxidase, subunit A, domain 2"/>
    <property type="match status" value="1"/>
</dbReference>
<dbReference type="Gene3D" id="3.50.50.60">
    <property type="entry name" value="FAD/NAD(P)-binding domain"/>
    <property type="match status" value="1"/>
</dbReference>
<dbReference type="InterPro" id="IPR002938">
    <property type="entry name" value="FAD-bd"/>
</dbReference>
<dbReference type="InterPro" id="IPR036188">
    <property type="entry name" value="FAD/NAD-bd_sf"/>
</dbReference>
<dbReference type="InterPro" id="IPR012941">
    <property type="entry name" value="Phe_hydrox_C_dim_dom"/>
</dbReference>
<dbReference type="InterPro" id="IPR038220">
    <property type="entry name" value="PHOX_C_sf"/>
</dbReference>
<dbReference type="InterPro" id="IPR050641">
    <property type="entry name" value="RIFMO-like"/>
</dbReference>
<dbReference type="InterPro" id="IPR036249">
    <property type="entry name" value="Thioredoxin-like_sf"/>
</dbReference>
<dbReference type="PANTHER" id="PTHR43004:SF20">
    <property type="entry name" value="2-MONOOXYGENASE, PUTATIVE (AFU_ORTHOLOGUE AFUA_1G13660)-RELATED"/>
    <property type="match status" value="1"/>
</dbReference>
<dbReference type="PANTHER" id="PTHR43004">
    <property type="entry name" value="TRK SYSTEM POTASSIUM UPTAKE PROTEIN"/>
    <property type="match status" value="1"/>
</dbReference>
<dbReference type="Pfam" id="PF01494">
    <property type="entry name" value="FAD_binding_3"/>
    <property type="match status" value="1"/>
</dbReference>
<dbReference type="Pfam" id="PF07976">
    <property type="entry name" value="Phe_hydrox_dim"/>
    <property type="match status" value="1"/>
</dbReference>
<dbReference type="PRINTS" id="PR00420">
    <property type="entry name" value="RNGMNOXGNASE"/>
</dbReference>
<dbReference type="SUPFAM" id="SSF54373">
    <property type="entry name" value="FAD-linked reductases, C-terminal domain"/>
    <property type="match status" value="1"/>
</dbReference>
<dbReference type="SUPFAM" id="SSF51905">
    <property type="entry name" value="FAD/NAD(P)-binding domain"/>
    <property type="match status" value="1"/>
</dbReference>
<dbReference type="SUPFAM" id="SSF52833">
    <property type="entry name" value="Thioredoxin-like"/>
    <property type="match status" value="1"/>
</dbReference>
<keyword id="KW-0274">FAD</keyword>
<keyword id="KW-0285">Flavoprotein</keyword>
<keyword id="KW-0472">Membrane</keyword>
<keyword id="KW-0560">Oxidoreductase</keyword>
<keyword id="KW-1185">Reference proteome</keyword>
<keyword id="KW-0812">Transmembrane</keyword>
<keyword id="KW-1133">Transmembrane helix</keyword>